<gene>
    <name evidence="1" type="primary">Odaph</name>
</gene>
<dbReference type="EMBL" id="AC136013">
    <property type="status" value="NOT_ANNOTATED_CDS"/>
    <property type="molecule type" value="Genomic_DNA"/>
</dbReference>
<dbReference type="FunCoup" id="A0A0G2K6Z9">
    <property type="interactions" value="1"/>
</dbReference>
<dbReference type="STRING" id="10116.ENSRNOP00000074004"/>
<dbReference type="PhosphoSitePlus" id="A0A0G2K6Z9"/>
<dbReference type="AGR" id="RGD:6489816"/>
<dbReference type="RGD" id="6489816">
    <property type="gene designation" value="Odaph"/>
</dbReference>
<dbReference type="VEuPathDB" id="HostDB:ENSRNOG00000059582"/>
<dbReference type="InParanoid" id="A0A0G2K6Z9"/>
<dbReference type="OMA" id="FYWPHRR"/>
<dbReference type="PRO" id="PR:A0A0G2K6Z9"/>
<dbReference type="Proteomes" id="UP000002494">
    <property type="component" value="Chromosome 14"/>
</dbReference>
<dbReference type="Bgee" id="ENSRNOG00000059582">
    <property type="expression patterns" value="Expressed in skeletal muscle tissue and 13 other cell types or tissues"/>
</dbReference>
<dbReference type="GO" id="GO:0005576">
    <property type="term" value="C:extracellular region"/>
    <property type="evidence" value="ECO:0007669"/>
    <property type="project" value="UniProtKB-SubCell"/>
</dbReference>
<dbReference type="GO" id="GO:0070169">
    <property type="term" value="P:positive regulation of biomineral tissue development"/>
    <property type="evidence" value="ECO:0000250"/>
    <property type="project" value="UniProtKB"/>
</dbReference>
<dbReference type="GO" id="GO:0070175">
    <property type="term" value="P:positive regulation of enamel mineralization"/>
    <property type="evidence" value="ECO:0000250"/>
    <property type="project" value="UniProtKB"/>
</dbReference>
<dbReference type="InterPro" id="IPR031706">
    <property type="entry name" value="ODAPH"/>
</dbReference>
<dbReference type="PANTHER" id="PTHR40376">
    <property type="entry name" value="ODONTOGENESIS ASSOCIATED PHOSPHOPROTEIN"/>
    <property type="match status" value="1"/>
</dbReference>
<dbReference type="PANTHER" id="PTHR40376:SF1">
    <property type="entry name" value="ODONTOGENESIS ASSOCIATED PHOSPHOPROTEIN"/>
    <property type="match status" value="1"/>
</dbReference>
<dbReference type="Pfam" id="PF15848">
    <property type="entry name" value="ODAPH"/>
    <property type="match status" value="1"/>
</dbReference>
<evidence type="ECO:0000250" key="1">
    <source>
        <dbReference type="UniProtKB" id="Q17RF5"/>
    </source>
</evidence>
<evidence type="ECO:0000255" key="2"/>
<evidence type="ECO:0000269" key="3">
    <source>
    </source>
</evidence>
<reference key="1">
    <citation type="journal article" date="2004" name="Nature">
        <title>Genome sequence of the Brown Norway rat yields insights into mammalian evolution.</title>
        <authorList>
            <person name="Gibbs R.A."/>
            <person name="Weinstock G.M."/>
            <person name="Metzker M.L."/>
            <person name="Muzny D.M."/>
            <person name="Sodergren E.J."/>
            <person name="Scherer S."/>
            <person name="Scott G."/>
            <person name="Steffen D."/>
            <person name="Worley K.C."/>
            <person name="Burch P.E."/>
            <person name="Okwuonu G."/>
            <person name="Hines S."/>
            <person name="Lewis L."/>
            <person name="Deramo C."/>
            <person name="Delgado O."/>
            <person name="Dugan-Rocha S."/>
            <person name="Miner G."/>
            <person name="Morgan M."/>
            <person name="Hawes A."/>
            <person name="Gill R."/>
            <person name="Holt R.A."/>
            <person name="Adams M.D."/>
            <person name="Amanatides P.G."/>
            <person name="Baden-Tillson H."/>
            <person name="Barnstead M."/>
            <person name="Chin S."/>
            <person name="Evans C.A."/>
            <person name="Ferriera S."/>
            <person name="Fosler C."/>
            <person name="Glodek A."/>
            <person name="Gu Z."/>
            <person name="Jennings D."/>
            <person name="Kraft C.L."/>
            <person name="Nguyen T."/>
            <person name="Pfannkoch C.M."/>
            <person name="Sitter C."/>
            <person name="Sutton G.G."/>
            <person name="Venter J.C."/>
            <person name="Woodage T."/>
            <person name="Smith D."/>
            <person name="Lee H.-M."/>
            <person name="Gustafson E."/>
            <person name="Cahill P."/>
            <person name="Kana A."/>
            <person name="Doucette-Stamm L."/>
            <person name="Weinstock K."/>
            <person name="Fechtel K."/>
            <person name="Weiss R.B."/>
            <person name="Dunn D.M."/>
            <person name="Green E.D."/>
            <person name="Blakesley R.W."/>
            <person name="Bouffard G.G."/>
            <person name="De Jong P.J."/>
            <person name="Osoegawa K."/>
            <person name="Zhu B."/>
            <person name="Marra M."/>
            <person name="Schein J."/>
            <person name="Bosdet I."/>
            <person name="Fjell C."/>
            <person name="Jones S."/>
            <person name="Krzywinski M."/>
            <person name="Mathewson C."/>
            <person name="Siddiqui A."/>
            <person name="Wye N."/>
            <person name="McPherson J."/>
            <person name="Zhao S."/>
            <person name="Fraser C.M."/>
            <person name="Shetty J."/>
            <person name="Shatsman S."/>
            <person name="Geer K."/>
            <person name="Chen Y."/>
            <person name="Abramzon S."/>
            <person name="Nierman W.C."/>
            <person name="Havlak P.H."/>
            <person name="Chen R."/>
            <person name="Durbin K.J."/>
            <person name="Egan A."/>
            <person name="Ren Y."/>
            <person name="Song X.-Z."/>
            <person name="Li B."/>
            <person name="Liu Y."/>
            <person name="Qin X."/>
            <person name="Cawley S."/>
            <person name="Cooney A.J."/>
            <person name="D'Souza L.M."/>
            <person name="Martin K."/>
            <person name="Wu J.Q."/>
            <person name="Gonzalez-Garay M.L."/>
            <person name="Jackson A.R."/>
            <person name="Kalafus K.J."/>
            <person name="McLeod M.P."/>
            <person name="Milosavljevic A."/>
            <person name="Virk D."/>
            <person name="Volkov A."/>
            <person name="Wheeler D.A."/>
            <person name="Zhang Z."/>
            <person name="Bailey J.A."/>
            <person name="Eichler E.E."/>
            <person name="Tuzun E."/>
            <person name="Birney E."/>
            <person name="Mongin E."/>
            <person name="Ureta-Vidal A."/>
            <person name="Woodwark C."/>
            <person name="Zdobnov E."/>
            <person name="Bork P."/>
            <person name="Suyama M."/>
            <person name="Torrents D."/>
            <person name="Alexandersson M."/>
            <person name="Trask B.J."/>
            <person name="Young J.M."/>
            <person name="Huang H."/>
            <person name="Wang H."/>
            <person name="Xing H."/>
            <person name="Daniels S."/>
            <person name="Gietzen D."/>
            <person name="Schmidt J."/>
            <person name="Stevens K."/>
            <person name="Vitt U."/>
            <person name="Wingrove J."/>
            <person name="Camara F."/>
            <person name="Mar Alba M."/>
            <person name="Abril J.F."/>
            <person name="Guigo R."/>
            <person name="Smit A."/>
            <person name="Dubchak I."/>
            <person name="Rubin E.M."/>
            <person name="Couronne O."/>
            <person name="Poliakov A."/>
            <person name="Huebner N."/>
            <person name="Ganten D."/>
            <person name="Goesele C."/>
            <person name="Hummel O."/>
            <person name="Kreitler T."/>
            <person name="Lee Y.-A."/>
            <person name="Monti J."/>
            <person name="Schulz H."/>
            <person name="Zimdahl H."/>
            <person name="Himmelbauer H."/>
            <person name="Lehrach H."/>
            <person name="Jacob H.J."/>
            <person name="Bromberg S."/>
            <person name="Gullings-Handley J."/>
            <person name="Jensen-Seaman M.I."/>
            <person name="Kwitek A.E."/>
            <person name="Lazar J."/>
            <person name="Pasko D."/>
            <person name="Tonellato P.J."/>
            <person name="Twigger S."/>
            <person name="Ponting C.P."/>
            <person name="Duarte J.M."/>
            <person name="Rice S."/>
            <person name="Goodstadt L."/>
            <person name="Beatson S.A."/>
            <person name="Emes R.D."/>
            <person name="Winter E.E."/>
            <person name="Webber C."/>
            <person name="Brandt P."/>
            <person name="Nyakatura G."/>
            <person name="Adetobi M."/>
            <person name="Chiaromonte F."/>
            <person name="Elnitski L."/>
            <person name="Eswara P."/>
            <person name="Hardison R.C."/>
            <person name="Hou M."/>
            <person name="Kolbe D."/>
            <person name="Makova K."/>
            <person name="Miller W."/>
            <person name="Nekrutenko A."/>
            <person name="Riemer C."/>
            <person name="Schwartz S."/>
            <person name="Taylor J."/>
            <person name="Yang S."/>
            <person name="Zhang Y."/>
            <person name="Lindpaintner K."/>
            <person name="Andrews T.D."/>
            <person name="Caccamo M."/>
            <person name="Clamp M."/>
            <person name="Clarke L."/>
            <person name="Curwen V."/>
            <person name="Durbin R.M."/>
            <person name="Eyras E."/>
            <person name="Searle S.M."/>
            <person name="Cooper G.M."/>
            <person name="Batzoglou S."/>
            <person name="Brudno M."/>
            <person name="Sidow A."/>
            <person name="Stone E.A."/>
            <person name="Payseur B.A."/>
            <person name="Bourque G."/>
            <person name="Lopez-Otin C."/>
            <person name="Puente X.S."/>
            <person name="Chakrabarti K."/>
            <person name="Chatterji S."/>
            <person name="Dewey C."/>
            <person name="Pachter L."/>
            <person name="Bray N."/>
            <person name="Yap V.B."/>
            <person name="Caspi A."/>
            <person name="Tesler G."/>
            <person name="Pevzner P.A."/>
            <person name="Haussler D."/>
            <person name="Roskin K.M."/>
            <person name="Baertsch R."/>
            <person name="Clawson H."/>
            <person name="Furey T.S."/>
            <person name="Hinrichs A.S."/>
            <person name="Karolchik D."/>
            <person name="Kent W.J."/>
            <person name="Rosenbloom K.R."/>
            <person name="Trumbower H."/>
            <person name="Weirauch M."/>
            <person name="Cooper D.N."/>
            <person name="Stenson P.D."/>
            <person name="Ma B."/>
            <person name="Brent M."/>
            <person name="Arumugam M."/>
            <person name="Shteynberg D."/>
            <person name="Copley R.R."/>
            <person name="Taylor M.S."/>
            <person name="Riethman H."/>
            <person name="Mudunuri U."/>
            <person name="Peterson J."/>
            <person name="Guyer M."/>
            <person name="Felsenfeld A."/>
            <person name="Old S."/>
            <person name="Mockrin S."/>
            <person name="Collins F.S."/>
        </authorList>
    </citation>
    <scope>NUCLEOTIDE SEQUENCE [LARGE SCALE GENOMIC DNA]</scope>
    <source>
        <strain>Brown Norway</strain>
    </source>
</reference>
<reference key="2">
    <citation type="journal article" date="2012" name="Am. J. Hum. Genet.">
        <title>Mutations in C4orf26, encoding a peptide with in vitro hydroxyapatite crystal nucleation and growth activity, cause amelogenesis imperfecta.</title>
        <authorList>
            <person name="Parry D.A."/>
            <person name="Brookes S.J."/>
            <person name="Logan C.V."/>
            <person name="Poulter J.A."/>
            <person name="El-Sayed W."/>
            <person name="Al-Bahlani S."/>
            <person name="Al Harasi S."/>
            <person name="Sayed J."/>
            <person name="Raif el M."/>
            <person name="Shore R.C."/>
            <person name="Dashash M."/>
            <person name="Barron M."/>
            <person name="Morgan J.E."/>
            <person name="Carr I.M."/>
            <person name="Taylor G.R."/>
            <person name="Johnson C.A."/>
            <person name="Aldred M.J."/>
            <person name="Dixon M.J."/>
            <person name="Wright J.T."/>
            <person name="Kirkham J."/>
            <person name="Inglehearn C.F."/>
            <person name="Mighell A.J."/>
        </authorList>
    </citation>
    <scope>TISSUE SPECIFICITY</scope>
</reference>
<protein>
    <recommendedName>
        <fullName>Odontogenesis-associated phosphoprotein</fullName>
    </recommendedName>
</protein>
<proteinExistence type="evidence at transcript level"/>
<comment type="function">
    <text evidence="1">May promote nucleation of hydroxyapatite.</text>
</comment>
<comment type="subcellular location">
    <subcellularLocation>
        <location evidence="1">Secreted</location>
    </subcellularLocation>
</comment>
<comment type="tissue specificity">
    <text evidence="3">Expressed in enamel organs and not expressed in the heart, kidney, or spleen.</text>
</comment>
<organism>
    <name type="scientific">Rattus norvegicus</name>
    <name type="common">Rat</name>
    <dbReference type="NCBI Taxonomy" id="10116"/>
    <lineage>
        <taxon>Eukaryota</taxon>
        <taxon>Metazoa</taxon>
        <taxon>Chordata</taxon>
        <taxon>Craniata</taxon>
        <taxon>Vertebrata</taxon>
        <taxon>Euteleostomi</taxon>
        <taxon>Mammalia</taxon>
        <taxon>Eutheria</taxon>
        <taxon>Euarchontoglires</taxon>
        <taxon>Glires</taxon>
        <taxon>Rodentia</taxon>
        <taxon>Myomorpha</taxon>
        <taxon>Muroidea</taxon>
        <taxon>Muridae</taxon>
        <taxon>Murinae</taxon>
        <taxon>Rattus</taxon>
    </lineage>
</organism>
<name>ODAPH_RAT</name>
<sequence>MAPGFHFSWLLVSWLVVTTVKGQDVMTPPGSQNNVNPTDCQIITLTPPPTTRNQLTRAQPVTRTPTFYFPPRRPGFYPRFPNIPFFPPNNRRFQLWPFYPPRGRLIPWRFFLGRRQLQSSSSEESLE</sequence>
<keyword id="KW-1185">Reference proteome</keyword>
<keyword id="KW-0964">Secreted</keyword>
<keyword id="KW-0732">Signal</keyword>
<accession>A0A0G2K6Z9</accession>
<feature type="signal peptide" evidence="2">
    <location>
        <begin position="1"/>
        <end position="23"/>
    </location>
</feature>
<feature type="chain" id="PRO_0000442288" description="Odontogenesis-associated phosphoprotein" evidence="2">
    <location>
        <begin position="24"/>
        <end position="127"/>
    </location>
</feature>